<keyword id="KW-0067">ATP-binding</keyword>
<keyword id="KW-0143">Chaperone</keyword>
<keyword id="KW-0963">Cytoplasm</keyword>
<keyword id="KW-0413">Isomerase</keyword>
<keyword id="KW-0547">Nucleotide-binding</keyword>
<feature type="chain" id="PRO_1000130075" description="Chaperonin GroEL">
    <location>
        <begin position="1"/>
        <end position="542"/>
    </location>
</feature>
<feature type="binding site" evidence="1">
    <location>
        <begin position="29"/>
        <end position="32"/>
    </location>
    <ligand>
        <name>ATP</name>
        <dbReference type="ChEBI" id="CHEBI:30616"/>
    </ligand>
</feature>
<feature type="binding site" evidence="1">
    <location>
        <begin position="86"/>
        <end position="90"/>
    </location>
    <ligand>
        <name>ATP</name>
        <dbReference type="ChEBI" id="CHEBI:30616"/>
    </ligand>
</feature>
<feature type="binding site" evidence="1">
    <location>
        <position position="413"/>
    </location>
    <ligand>
        <name>ATP</name>
        <dbReference type="ChEBI" id="CHEBI:30616"/>
    </ligand>
</feature>
<feature type="binding site" evidence="1">
    <location>
        <position position="494"/>
    </location>
    <ligand>
        <name>ATP</name>
        <dbReference type="ChEBI" id="CHEBI:30616"/>
    </ligand>
</feature>
<organism>
    <name type="scientific">Endomicrobium trichonymphae</name>
    <dbReference type="NCBI Taxonomy" id="1408204"/>
    <lineage>
        <taxon>Bacteria</taxon>
        <taxon>Pseudomonadati</taxon>
        <taxon>Elusimicrobiota</taxon>
        <taxon>Endomicrobiia</taxon>
        <taxon>Endomicrobiales</taxon>
        <taxon>Endomicrobiaceae</taxon>
        <taxon>Candidatus Endomicrobiellum</taxon>
    </lineage>
</organism>
<dbReference type="EC" id="5.6.1.7" evidence="1"/>
<dbReference type="EMBL" id="AP009510">
    <property type="protein sequence ID" value="BAG14160.1"/>
    <property type="molecule type" value="Genomic_DNA"/>
</dbReference>
<dbReference type="RefSeq" id="WP_015423681.1">
    <property type="nucleotide sequence ID" value="NC_020419.1"/>
</dbReference>
<dbReference type="SMR" id="B1GYR7"/>
<dbReference type="STRING" id="471821.TGRD_677"/>
<dbReference type="KEGG" id="eti:RSTT_638"/>
<dbReference type="KEGG" id="rsd:TGRD_677"/>
<dbReference type="PATRIC" id="fig|471821.5.peg.1158"/>
<dbReference type="HOGENOM" id="CLU_016503_3_0_0"/>
<dbReference type="OrthoDB" id="9766614at2"/>
<dbReference type="Proteomes" id="UP000001691">
    <property type="component" value="Chromosome"/>
</dbReference>
<dbReference type="GO" id="GO:0005737">
    <property type="term" value="C:cytoplasm"/>
    <property type="evidence" value="ECO:0007669"/>
    <property type="project" value="UniProtKB-SubCell"/>
</dbReference>
<dbReference type="GO" id="GO:0005524">
    <property type="term" value="F:ATP binding"/>
    <property type="evidence" value="ECO:0007669"/>
    <property type="project" value="UniProtKB-UniRule"/>
</dbReference>
<dbReference type="GO" id="GO:0140662">
    <property type="term" value="F:ATP-dependent protein folding chaperone"/>
    <property type="evidence" value="ECO:0007669"/>
    <property type="project" value="InterPro"/>
</dbReference>
<dbReference type="GO" id="GO:0016853">
    <property type="term" value="F:isomerase activity"/>
    <property type="evidence" value="ECO:0007669"/>
    <property type="project" value="UniProtKB-KW"/>
</dbReference>
<dbReference type="GO" id="GO:0051082">
    <property type="term" value="F:unfolded protein binding"/>
    <property type="evidence" value="ECO:0007669"/>
    <property type="project" value="UniProtKB-UniRule"/>
</dbReference>
<dbReference type="GO" id="GO:0042026">
    <property type="term" value="P:protein refolding"/>
    <property type="evidence" value="ECO:0007669"/>
    <property type="project" value="UniProtKB-UniRule"/>
</dbReference>
<dbReference type="CDD" id="cd03344">
    <property type="entry name" value="GroEL"/>
    <property type="match status" value="1"/>
</dbReference>
<dbReference type="FunFam" id="3.50.7.10:FF:000001">
    <property type="entry name" value="60 kDa chaperonin"/>
    <property type="match status" value="1"/>
</dbReference>
<dbReference type="Gene3D" id="3.50.7.10">
    <property type="entry name" value="GroEL"/>
    <property type="match status" value="1"/>
</dbReference>
<dbReference type="Gene3D" id="1.10.560.10">
    <property type="entry name" value="GroEL-like equatorial domain"/>
    <property type="match status" value="1"/>
</dbReference>
<dbReference type="Gene3D" id="3.30.260.10">
    <property type="entry name" value="TCP-1-like chaperonin intermediate domain"/>
    <property type="match status" value="1"/>
</dbReference>
<dbReference type="HAMAP" id="MF_00600">
    <property type="entry name" value="CH60"/>
    <property type="match status" value="1"/>
</dbReference>
<dbReference type="InterPro" id="IPR001844">
    <property type="entry name" value="Cpn60/GroEL"/>
</dbReference>
<dbReference type="InterPro" id="IPR002423">
    <property type="entry name" value="Cpn60/GroEL/TCP-1"/>
</dbReference>
<dbReference type="InterPro" id="IPR027409">
    <property type="entry name" value="GroEL-like_apical_dom_sf"/>
</dbReference>
<dbReference type="InterPro" id="IPR027413">
    <property type="entry name" value="GROEL-like_equatorial_sf"/>
</dbReference>
<dbReference type="InterPro" id="IPR027410">
    <property type="entry name" value="TCP-1-like_intermed_sf"/>
</dbReference>
<dbReference type="NCBIfam" id="TIGR02348">
    <property type="entry name" value="GroEL"/>
    <property type="match status" value="1"/>
</dbReference>
<dbReference type="NCBIfam" id="NF000592">
    <property type="entry name" value="PRK00013.1"/>
    <property type="match status" value="1"/>
</dbReference>
<dbReference type="NCBIfam" id="NF009487">
    <property type="entry name" value="PRK12849.1"/>
    <property type="match status" value="1"/>
</dbReference>
<dbReference type="NCBIfam" id="NF009488">
    <property type="entry name" value="PRK12850.1"/>
    <property type="match status" value="1"/>
</dbReference>
<dbReference type="NCBIfam" id="NF009489">
    <property type="entry name" value="PRK12851.1"/>
    <property type="match status" value="1"/>
</dbReference>
<dbReference type="PANTHER" id="PTHR45633">
    <property type="entry name" value="60 KDA HEAT SHOCK PROTEIN, MITOCHONDRIAL"/>
    <property type="match status" value="1"/>
</dbReference>
<dbReference type="Pfam" id="PF00118">
    <property type="entry name" value="Cpn60_TCP1"/>
    <property type="match status" value="1"/>
</dbReference>
<dbReference type="PRINTS" id="PR00298">
    <property type="entry name" value="CHAPERONIN60"/>
</dbReference>
<dbReference type="SUPFAM" id="SSF52029">
    <property type="entry name" value="GroEL apical domain-like"/>
    <property type="match status" value="1"/>
</dbReference>
<dbReference type="SUPFAM" id="SSF48592">
    <property type="entry name" value="GroEL equatorial domain-like"/>
    <property type="match status" value="1"/>
</dbReference>
<dbReference type="SUPFAM" id="SSF54849">
    <property type="entry name" value="GroEL-intermediate domain like"/>
    <property type="match status" value="1"/>
</dbReference>
<accession>B1GYR7</accession>
<reference key="1">
    <citation type="journal article" date="2008" name="Proc. Natl. Acad. Sci. U.S.A.">
        <title>Complete genome of the uncultured termite group 1 bacteria in a single host protist cell.</title>
        <authorList>
            <person name="Hongoh Y."/>
            <person name="Sharma V.K."/>
            <person name="Prakash T."/>
            <person name="Noda S."/>
            <person name="Taylor T.D."/>
            <person name="Kudo T."/>
            <person name="Sakaki Y."/>
            <person name="Toyoda A."/>
            <person name="Hattori M."/>
            <person name="Ohkuma M."/>
        </authorList>
    </citation>
    <scope>NUCLEOTIDE SEQUENCE [LARGE SCALE GENOMIC DNA]</scope>
</reference>
<sequence length="542" mass="58054">MAKQLIYSDEARKAMKSGVDKLANAVKITLGPKGRYVVLDKKFGAPTITNDGVTIAKEIELEDPFENMGAQLVKEVASKTNDIAGDGTTTATVLAQSLINEGLKNITAGANANHIKKGIEKAVAAAIDEIKKIAKQVKNKGEIAQIASISASDKEIGNLIADAMEKVGKDGVITVEEGKSSETTLDVVEGMQFDRGYSSHYFVTDTERMQAILEDPYIIITDKKISSMQEILPLLEKIIQTGKSFMIIAEDIEGEALATLVLNKIRGTLKVIAVKAPGFGDRRKEMLQDIAILTGGTVITEETGLKLDKATIDLLGQAKRIVVDKENTTIVSGLGDKKEIEARIAQIRKQIEDTKSDYDKEKLQERLAKLVGGVAVVNVGAATEVEMKTKKFKVEDALNATRAGVEEGIVAGGGVALLKTQTVLEKINAADSDEKTGIEIVLKALEGPIRMIIENAGLEASVVVDKVKNSKDTAFGYDADNNEYVDMIKAGIVDPAKVTRTALENAASIASLILTTETLVTDIPEKSPKFPGGGGMPPMPEY</sequence>
<name>CH60_ENDTX</name>
<comment type="function">
    <text evidence="1">Together with its co-chaperonin GroES, plays an essential role in assisting protein folding. The GroEL-GroES system forms a nano-cage that allows encapsulation of the non-native substrate proteins and provides a physical environment optimized to promote and accelerate protein folding.</text>
</comment>
<comment type="catalytic activity">
    <reaction evidence="1">
        <text>ATP + H2O + a folded polypeptide = ADP + phosphate + an unfolded polypeptide.</text>
        <dbReference type="EC" id="5.6.1.7"/>
    </reaction>
</comment>
<comment type="subunit">
    <text evidence="1">Forms a cylinder of 14 subunits composed of two heptameric rings stacked back-to-back. Interacts with the co-chaperonin GroES.</text>
</comment>
<comment type="subcellular location">
    <subcellularLocation>
        <location evidence="1">Cytoplasm</location>
    </subcellularLocation>
</comment>
<comment type="similarity">
    <text evidence="1">Belongs to the chaperonin (HSP60) family.</text>
</comment>
<evidence type="ECO:0000255" key="1">
    <source>
        <dbReference type="HAMAP-Rule" id="MF_00600"/>
    </source>
</evidence>
<proteinExistence type="inferred from homology"/>
<gene>
    <name evidence="1" type="primary">groEL</name>
    <name evidence="1" type="synonym">groL</name>
    <name type="ordered locus">TGRD_677</name>
</gene>
<protein>
    <recommendedName>
        <fullName evidence="1">Chaperonin GroEL</fullName>
        <ecNumber evidence="1">5.6.1.7</ecNumber>
    </recommendedName>
    <alternativeName>
        <fullName evidence="1">60 kDa chaperonin</fullName>
    </alternativeName>
    <alternativeName>
        <fullName evidence="1">Chaperonin-60</fullName>
        <shortName evidence="1">Cpn60</shortName>
    </alternativeName>
</protein>